<sequence length="529" mass="59775">MDTRFHCVYLLTSLDPQCAGEYYIGYTVDPIRRLRQHNGEIVSGAWRTKRRGRPWELLCCVSGFGEDRIALKFEWCWQHPTKSTRLKTQMTQLRGVHRLPYAVGVLHLLLRADLFARLQLTLHIFEPERVGRVVAELQGRVPSISPLVATSLLRIEEITKERFMSLYLDGVSGDGTAGDGCVYFVTAPLSSQPDVDAPSRRVRSCRYLSEEDVFRQHARVKELLEANQCPCALCSLPLRSPYFVRCYRTPFCALRAHLACLAMWFTYETMQKRDVTMGQSTRNERSGEYSNKIKDDSNDGTMDAHASGRQLHSLSVNNADFSSSRDAGSILDSSGHISAFEESRCASSPSLTLLPCQPCPCPLCDEPLQWGALVHDLKRRAVLEKRWMERQRREKIEAALAERLQRLQNSSLTERKSRRKATPALGQKRNRGEYCGDTVGDGGKEAVTNWRARAMDGCDSWNDTNDFSHSVSLPPSRDEGYACDSSRRGVGGSKHTTRMTDEGKNDSITDICDCVLQLTEFNLDEWLDA</sequence>
<feature type="chain" id="PRO_0000383768" description="Structure-specific endonuclease subunit SLX1 homolog 1">
    <location>
        <begin position="1"/>
        <end position="529"/>
    </location>
</feature>
<feature type="domain" description="GIY-YIG" evidence="1">
    <location>
        <begin position="4"/>
        <end position="89"/>
    </location>
</feature>
<feature type="zinc finger region" description="SLX1-type" evidence="1">
    <location>
        <begin position="231"/>
        <end position="364"/>
    </location>
</feature>
<feature type="region of interest" description="Disordered" evidence="2">
    <location>
        <begin position="275"/>
        <end position="305"/>
    </location>
</feature>
<feature type="region of interest" description="Disordered" evidence="2">
    <location>
        <begin position="409"/>
        <end position="437"/>
    </location>
</feature>
<feature type="region of interest" description="Disordered" evidence="2">
    <location>
        <begin position="470"/>
        <end position="501"/>
    </location>
</feature>
<feature type="compositionally biased region" description="Basic and acidic residues" evidence="2">
    <location>
        <begin position="282"/>
        <end position="297"/>
    </location>
</feature>
<organism>
    <name type="scientific">Trypanosoma cruzi (strain CL Brener)</name>
    <dbReference type="NCBI Taxonomy" id="353153"/>
    <lineage>
        <taxon>Eukaryota</taxon>
        <taxon>Discoba</taxon>
        <taxon>Euglenozoa</taxon>
        <taxon>Kinetoplastea</taxon>
        <taxon>Metakinetoplastina</taxon>
        <taxon>Trypanosomatida</taxon>
        <taxon>Trypanosomatidae</taxon>
        <taxon>Trypanosoma</taxon>
        <taxon>Schizotrypanum</taxon>
    </lineage>
</organism>
<reference key="1">
    <citation type="journal article" date="2005" name="Science">
        <title>The genome sequence of Trypanosoma cruzi, etiologic agent of Chagas disease.</title>
        <authorList>
            <person name="El-Sayed N.M.A."/>
            <person name="Myler P.J."/>
            <person name="Bartholomeu D.C."/>
            <person name="Nilsson D."/>
            <person name="Aggarwal G."/>
            <person name="Tran A.-N."/>
            <person name="Ghedin E."/>
            <person name="Worthey E.A."/>
            <person name="Delcher A.L."/>
            <person name="Blandin G."/>
            <person name="Westenberger S.J."/>
            <person name="Caler E."/>
            <person name="Cerqueira G.C."/>
            <person name="Branche C."/>
            <person name="Haas B."/>
            <person name="Anupama A."/>
            <person name="Arner E."/>
            <person name="Aslund L."/>
            <person name="Attipoe P."/>
            <person name="Bontempi E."/>
            <person name="Bringaud F."/>
            <person name="Burton P."/>
            <person name="Cadag E."/>
            <person name="Campbell D.A."/>
            <person name="Carrington M."/>
            <person name="Crabtree J."/>
            <person name="Darban H."/>
            <person name="da Silveira J.F."/>
            <person name="de Jong P."/>
            <person name="Edwards K."/>
            <person name="Englund P.T."/>
            <person name="Fazelina G."/>
            <person name="Feldblyum T."/>
            <person name="Ferella M."/>
            <person name="Frasch A.C."/>
            <person name="Gull K."/>
            <person name="Horn D."/>
            <person name="Hou L."/>
            <person name="Huang Y."/>
            <person name="Kindlund E."/>
            <person name="Klingbeil M."/>
            <person name="Kluge S."/>
            <person name="Koo H."/>
            <person name="Lacerda D."/>
            <person name="Levin M.J."/>
            <person name="Lorenzi H."/>
            <person name="Louie T."/>
            <person name="Machado C.R."/>
            <person name="McCulloch R."/>
            <person name="McKenna A."/>
            <person name="Mizuno Y."/>
            <person name="Mottram J.C."/>
            <person name="Nelson S."/>
            <person name="Ochaya S."/>
            <person name="Osoegawa K."/>
            <person name="Pai G."/>
            <person name="Parsons M."/>
            <person name="Pentony M."/>
            <person name="Pettersson U."/>
            <person name="Pop M."/>
            <person name="Ramirez J.L."/>
            <person name="Rinta J."/>
            <person name="Robertson L."/>
            <person name="Salzberg S.L."/>
            <person name="Sanchez D.O."/>
            <person name="Seyler A."/>
            <person name="Sharma R."/>
            <person name="Shetty J."/>
            <person name="Simpson A.J."/>
            <person name="Sisk E."/>
            <person name="Tammi M.T."/>
            <person name="Tarleton R."/>
            <person name="Teixeira S."/>
            <person name="Van Aken S."/>
            <person name="Vogt C."/>
            <person name="Ward P.N."/>
            <person name="Wickstead B."/>
            <person name="Wortman J."/>
            <person name="White O."/>
            <person name="Fraser C.M."/>
            <person name="Stuart K.D."/>
            <person name="Andersson B."/>
        </authorList>
    </citation>
    <scope>NUCLEOTIDE SEQUENCE [LARGE SCALE GENOMIC DNA]</scope>
    <source>
        <strain>CL Brener</strain>
    </source>
</reference>
<dbReference type="EC" id="3.1.-.-" evidence="1"/>
<dbReference type="EMBL" id="AAHK01000875">
    <property type="protein sequence ID" value="EAN88519.1"/>
    <property type="molecule type" value="Genomic_DNA"/>
</dbReference>
<dbReference type="RefSeq" id="XP_810370.1">
    <property type="nucleotide sequence ID" value="XM_805277.1"/>
</dbReference>
<dbReference type="SMR" id="Q4D7L5"/>
<dbReference type="STRING" id="353153.Q4D7L5"/>
<dbReference type="PaxDb" id="353153-Q4D7L5"/>
<dbReference type="EnsemblProtists" id="EAN88519">
    <property type="protein sequence ID" value="EAN88519"/>
    <property type="gene ID" value="Tc00.1047053509453.60"/>
</dbReference>
<dbReference type="GeneID" id="3541122"/>
<dbReference type="KEGG" id="tcr:509453.60"/>
<dbReference type="eggNOG" id="KOG3005">
    <property type="taxonomic scope" value="Eukaryota"/>
</dbReference>
<dbReference type="InParanoid" id="Q4D7L5"/>
<dbReference type="OMA" id="PWTIVCC"/>
<dbReference type="Proteomes" id="UP000002296">
    <property type="component" value="Unassembled WGS sequence"/>
</dbReference>
<dbReference type="GO" id="GO:0033557">
    <property type="term" value="C:Slx1-Slx4 complex"/>
    <property type="evidence" value="ECO:0007669"/>
    <property type="project" value="UniProtKB-UniRule"/>
</dbReference>
<dbReference type="GO" id="GO:0017108">
    <property type="term" value="F:5'-flap endonuclease activity"/>
    <property type="evidence" value="ECO:0007669"/>
    <property type="project" value="InterPro"/>
</dbReference>
<dbReference type="GO" id="GO:0008270">
    <property type="term" value="F:zinc ion binding"/>
    <property type="evidence" value="ECO:0007669"/>
    <property type="project" value="UniProtKB-KW"/>
</dbReference>
<dbReference type="GO" id="GO:0006310">
    <property type="term" value="P:DNA recombination"/>
    <property type="evidence" value="ECO:0007669"/>
    <property type="project" value="UniProtKB-UniRule"/>
</dbReference>
<dbReference type="GO" id="GO:0006281">
    <property type="term" value="P:DNA repair"/>
    <property type="evidence" value="ECO:0007669"/>
    <property type="project" value="UniProtKB-UniRule"/>
</dbReference>
<dbReference type="CDD" id="cd10455">
    <property type="entry name" value="GIY-YIG_SLX1"/>
    <property type="match status" value="1"/>
</dbReference>
<dbReference type="Gene3D" id="3.40.1440.10">
    <property type="entry name" value="GIY-YIG endonuclease"/>
    <property type="match status" value="1"/>
</dbReference>
<dbReference type="HAMAP" id="MF_03100">
    <property type="entry name" value="Endonuc_su_Slx1"/>
    <property type="match status" value="1"/>
</dbReference>
<dbReference type="InterPro" id="IPR000305">
    <property type="entry name" value="GIY-YIG_endonuc"/>
</dbReference>
<dbReference type="InterPro" id="IPR035901">
    <property type="entry name" value="GIY-YIG_endonuc_sf"/>
</dbReference>
<dbReference type="InterPro" id="IPR027520">
    <property type="entry name" value="Slx1"/>
</dbReference>
<dbReference type="InterPro" id="IPR050381">
    <property type="entry name" value="SLX1_endonuclease"/>
</dbReference>
<dbReference type="PANTHER" id="PTHR20208">
    <property type="entry name" value="STRUCTURE-SPECIFIC ENDONUCLEASE SUBUNIT SLX1"/>
    <property type="match status" value="1"/>
</dbReference>
<dbReference type="PANTHER" id="PTHR20208:SF13">
    <property type="entry name" value="STRUCTURE-SPECIFIC ENDONUCLEASE SUBUNIT SLX1"/>
    <property type="match status" value="1"/>
</dbReference>
<dbReference type="Pfam" id="PF01541">
    <property type="entry name" value="GIY-YIG"/>
    <property type="match status" value="1"/>
</dbReference>
<dbReference type="PROSITE" id="PS50164">
    <property type="entry name" value="GIY_YIG"/>
    <property type="match status" value="1"/>
</dbReference>
<keyword id="KW-0227">DNA damage</keyword>
<keyword id="KW-0233">DNA recombination</keyword>
<keyword id="KW-0234">DNA repair</keyword>
<keyword id="KW-0255">Endonuclease</keyword>
<keyword id="KW-0378">Hydrolase</keyword>
<keyword id="KW-0479">Metal-binding</keyword>
<keyword id="KW-0540">Nuclease</keyword>
<keyword id="KW-0539">Nucleus</keyword>
<keyword id="KW-1185">Reference proteome</keyword>
<keyword id="KW-0862">Zinc</keyword>
<keyword id="KW-0863">Zinc-finger</keyword>
<proteinExistence type="inferred from homology"/>
<protein>
    <recommendedName>
        <fullName evidence="1">Structure-specific endonuclease subunit SLX1 homolog 1</fullName>
        <ecNumber evidence="1">3.1.-.-</ecNumber>
    </recommendedName>
</protein>
<accession>Q4D7L5</accession>
<name>SLX11_TRYCC</name>
<evidence type="ECO:0000255" key="1">
    <source>
        <dbReference type="HAMAP-Rule" id="MF_03100"/>
    </source>
</evidence>
<evidence type="ECO:0000256" key="2">
    <source>
        <dbReference type="SAM" id="MobiDB-lite"/>
    </source>
</evidence>
<comment type="function">
    <text evidence="1">Catalytic subunit of a heterodimeric structure-specific endonuclease that resolves DNA secondary structures generated during DNA repair and recombination. Has endonuclease activity towards branched DNA substrates, introducing single-strand cuts in duplex DNA close to junctions with ss-DNA.</text>
</comment>
<comment type="cofactor">
    <cofactor evidence="1">
        <name>a divalent metal cation</name>
        <dbReference type="ChEBI" id="CHEBI:60240"/>
    </cofactor>
</comment>
<comment type="subunit">
    <text evidence="1">Forms a heterodimer with a member of the SLX4 family.</text>
</comment>
<comment type="subcellular location">
    <subcellularLocation>
        <location evidence="1">Nucleus</location>
    </subcellularLocation>
</comment>
<comment type="similarity">
    <text evidence="1">Belongs to the SLX1 family.</text>
</comment>
<gene>
    <name type="ORF">Tc00.1047053509453.60</name>
</gene>